<organism>
    <name type="scientific">Pseudomonas aeruginosa (strain ATCC 15692 / DSM 22644 / CIP 104116 / JCM 14847 / LMG 12228 / 1C / PRS 101 / PAO1)</name>
    <dbReference type="NCBI Taxonomy" id="208964"/>
    <lineage>
        <taxon>Bacteria</taxon>
        <taxon>Pseudomonadati</taxon>
        <taxon>Pseudomonadota</taxon>
        <taxon>Gammaproteobacteria</taxon>
        <taxon>Pseudomonadales</taxon>
        <taxon>Pseudomonadaceae</taxon>
        <taxon>Pseudomonas</taxon>
    </lineage>
</organism>
<accession>Q9HT06</accession>
<name>YIDC_PSEAE</name>
<dbReference type="EMBL" id="AE004091">
    <property type="protein sequence ID" value="AAG08953.1"/>
    <property type="molecule type" value="Genomic_DNA"/>
</dbReference>
<dbReference type="PIR" id="G82950">
    <property type="entry name" value="G82950"/>
</dbReference>
<dbReference type="RefSeq" id="NP_254255.1">
    <property type="nucleotide sequence ID" value="NC_002516.2"/>
</dbReference>
<dbReference type="RefSeq" id="WP_003114648.1">
    <property type="nucleotide sequence ID" value="NZ_QZGE01000012.1"/>
</dbReference>
<dbReference type="SMR" id="Q9HT06"/>
<dbReference type="FunCoup" id="Q9HT06">
    <property type="interactions" value="362"/>
</dbReference>
<dbReference type="STRING" id="208964.PA5568"/>
<dbReference type="PaxDb" id="208964-PA5568"/>
<dbReference type="GeneID" id="878127"/>
<dbReference type="KEGG" id="pae:PA5568"/>
<dbReference type="PATRIC" id="fig|208964.12.peg.5834"/>
<dbReference type="PseudoCAP" id="PA5568"/>
<dbReference type="HOGENOM" id="CLU_016535_3_0_6"/>
<dbReference type="InParanoid" id="Q9HT06"/>
<dbReference type="OrthoDB" id="9780552at2"/>
<dbReference type="PhylomeDB" id="Q9HT06"/>
<dbReference type="BioCyc" id="PAER208964:G1FZ6-5695-MONOMER"/>
<dbReference type="Proteomes" id="UP000002438">
    <property type="component" value="Chromosome"/>
</dbReference>
<dbReference type="GO" id="GO:0005886">
    <property type="term" value="C:plasma membrane"/>
    <property type="evidence" value="ECO:0000318"/>
    <property type="project" value="GO_Central"/>
</dbReference>
<dbReference type="GO" id="GO:0032977">
    <property type="term" value="F:membrane insertase activity"/>
    <property type="evidence" value="ECO:0000318"/>
    <property type="project" value="GO_Central"/>
</dbReference>
<dbReference type="GO" id="GO:0051205">
    <property type="term" value="P:protein insertion into membrane"/>
    <property type="evidence" value="ECO:0000318"/>
    <property type="project" value="GO_Central"/>
</dbReference>
<dbReference type="GO" id="GO:0015031">
    <property type="term" value="P:protein transport"/>
    <property type="evidence" value="ECO:0007669"/>
    <property type="project" value="UniProtKB-KW"/>
</dbReference>
<dbReference type="CDD" id="cd20070">
    <property type="entry name" value="5TM_YidC_Alb3"/>
    <property type="match status" value="1"/>
</dbReference>
<dbReference type="CDD" id="cd19961">
    <property type="entry name" value="EcYidC-like_peri"/>
    <property type="match status" value="1"/>
</dbReference>
<dbReference type="FunFam" id="2.70.98.90:FF:000005">
    <property type="entry name" value="Membrane protein insertase YidC"/>
    <property type="match status" value="1"/>
</dbReference>
<dbReference type="Gene3D" id="2.70.98.90">
    <property type="match status" value="1"/>
</dbReference>
<dbReference type="HAMAP" id="MF_01810">
    <property type="entry name" value="YidC_type1"/>
    <property type="match status" value="1"/>
</dbReference>
<dbReference type="InterPro" id="IPR019998">
    <property type="entry name" value="Membr_insert_YidC"/>
</dbReference>
<dbReference type="InterPro" id="IPR028053">
    <property type="entry name" value="Membr_insert_YidC_N"/>
</dbReference>
<dbReference type="InterPro" id="IPR001708">
    <property type="entry name" value="YidC/ALB3/OXA1/COX18"/>
</dbReference>
<dbReference type="InterPro" id="IPR028055">
    <property type="entry name" value="YidC/Oxa/ALB_C"/>
</dbReference>
<dbReference type="InterPro" id="IPR047196">
    <property type="entry name" value="YidC_ALB_C"/>
</dbReference>
<dbReference type="InterPro" id="IPR038221">
    <property type="entry name" value="YidC_periplasmic_sf"/>
</dbReference>
<dbReference type="NCBIfam" id="NF002352">
    <property type="entry name" value="PRK01318.1-3"/>
    <property type="match status" value="1"/>
</dbReference>
<dbReference type="NCBIfam" id="TIGR03593">
    <property type="entry name" value="yidC_nterm"/>
    <property type="match status" value="2"/>
</dbReference>
<dbReference type="NCBIfam" id="TIGR03592">
    <property type="entry name" value="yidC_oxa1_cterm"/>
    <property type="match status" value="1"/>
</dbReference>
<dbReference type="PANTHER" id="PTHR12428:SF65">
    <property type="entry name" value="CYTOCHROME C OXIDASE ASSEMBLY PROTEIN COX18, MITOCHONDRIAL"/>
    <property type="match status" value="1"/>
</dbReference>
<dbReference type="PANTHER" id="PTHR12428">
    <property type="entry name" value="OXA1"/>
    <property type="match status" value="1"/>
</dbReference>
<dbReference type="Pfam" id="PF02096">
    <property type="entry name" value="60KD_IMP"/>
    <property type="match status" value="1"/>
</dbReference>
<dbReference type="Pfam" id="PF14849">
    <property type="entry name" value="YidC_periplas"/>
    <property type="match status" value="2"/>
</dbReference>
<dbReference type="PRINTS" id="PR00701">
    <property type="entry name" value="60KDINNERMP"/>
</dbReference>
<dbReference type="PRINTS" id="PR01900">
    <property type="entry name" value="YIDCPROTEIN"/>
</dbReference>
<reference key="1">
    <citation type="journal article" date="2000" name="Nature">
        <title>Complete genome sequence of Pseudomonas aeruginosa PAO1, an opportunistic pathogen.</title>
        <authorList>
            <person name="Stover C.K."/>
            <person name="Pham X.-Q.T."/>
            <person name="Erwin A.L."/>
            <person name="Mizoguchi S.D."/>
            <person name="Warrener P."/>
            <person name="Hickey M.J."/>
            <person name="Brinkman F.S.L."/>
            <person name="Hufnagle W.O."/>
            <person name="Kowalik D.J."/>
            <person name="Lagrou M."/>
            <person name="Garber R.L."/>
            <person name="Goltry L."/>
            <person name="Tolentino E."/>
            <person name="Westbrock-Wadman S."/>
            <person name="Yuan Y."/>
            <person name="Brody L.L."/>
            <person name="Coulter S.N."/>
            <person name="Folger K.R."/>
            <person name="Kas A."/>
            <person name="Larbig K."/>
            <person name="Lim R.M."/>
            <person name="Smith K.A."/>
            <person name="Spencer D.H."/>
            <person name="Wong G.K.-S."/>
            <person name="Wu Z."/>
            <person name="Paulsen I.T."/>
            <person name="Reizer J."/>
            <person name="Saier M.H. Jr."/>
            <person name="Hancock R.E.W."/>
            <person name="Lory S."/>
            <person name="Olson M.V."/>
        </authorList>
    </citation>
    <scope>NUCLEOTIDE SEQUENCE [LARGE SCALE GENOMIC DNA]</scope>
    <source>
        <strain>ATCC 15692 / DSM 22644 / CIP 104116 / JCM 14847 / LMG 12228 / 1C / PRS 101 / PAO1</strain>
    </source>
</reference>
<keyword id="KW-0997">Cell inner membrane</keyword>
<keyword id="KW-1003">Cell membrane</keyword>
<keyword id="KW-0143">Chaperone</keyword>
<keyword id="KW-0472">Membrane</keyword>
<keyword id="KW-0653">Protein transport</keyword>
<keyword id="KW-1185">Reference proteome</keyword>
<keyword id="KW-0812">Transmembrane</keyword>
<keyword id="KW-1133">Transmembrane helix</keyword>
<keyword id="KW-0813">Transport</keyword>
<protein>
    <recommendedName>
        <fullName evidence="1">Membrane protein insertase YidC</fullName>
    </recommendedName>
    <alternativeName>
        <fullName evidence="1">Foldase YidC</fullName>
    </alternativeName>
    <alternativeName>
        <fullName evidence="1">Membrane integrase YidC</fullName>
    </alternativeName>
    <alternativeName>
        <fullName evidence="1">Membrane protein YidC</fullName>
    </alternativeName>
</protein>
<feature type="chain" id="PRO_0000124741" description="Membrane protein insertase YidC">
    <location>
        <begin position="1"/>
        <end position="578"/>
    </location>
</feature>
<feature type="transmembrane region" description="Helical" evidence="1">
    <location>
        <begin position="3"/>
        <end position="23"/>
    </location>
</feature>
<feature type="transmembrane region" description="Helical" evidence="1">
    <location>
        <begin position="361"/>
        <end position="381"/>
    </location>
</feature>
<feature type="transmembrane region" description="Helical" evidence="1">
    <location>
        <begin position="387"/>
        <end position="407"/>
    </location>
</feature>
<feature type="transmembrane region" description="Helical" evidence="1">
    <location>
        <begin position="457"/>
        <end position="477"/>
    </location>
</feature>
<feature type="transmembrane region" description="Helical" evidence="1">
    <location>
        <begin position="500"/>
        <end position="520"/>
    </location>
</feature>
<feature type="transmembrane region" description="Helical" evidence="1">
    <location>
        <begin position="535"/>
        <end position="555"/>
    </location>
</feature>
<feature type="region of interest" description="Disordered" evidence="2">
    <location>
        <begin position="34"/>
        <end position="72"/>
    </location>
</feature>
<feature type="compositionally biased region" description="Polar residues" evidence="2">
    <location>
        <begin position="37"/>
        <end position="66"/>
    </location>
</feature>
<gene>
    <name evidence="1" type="primary">yidC</name>
    <name type="ordered locus">PA5568</name>
</gene>
<sequence length="578" mass="64075">MDIQRSILIVALAVVSYLLVLQWNKDYGQPELPAASASMNTTQGLPDTPSASGTSSDVPTAQSSAAGSEAADKPVAVSDKLIQVKTDVLDLAIDPRGGDIVQLGLLQYPRRLDRPDVPFPLFDNGRERTYLAQSGLTGADGPDASSAGRPLFRSAQSSYQLADGQNELVVDLSFSHDGVNYIKRFTFHRGLKADCSDKEKAQKKIECINENAYQVGVSYLIDNQSGKTWSGNLFAQLKRDGSADPSSTTATGVSTYLGAAVWTPDSPYKKISTKDMDKEQFKESVQGGWVAWLQHYFVTAWVPTKGEQHQVMTRKDGQGNYIVGFTGPTLSVPAGSKVETDLTLYAGPKLQKHLKELSPGLELTVDYGFLWFIAQPIFWLLQHIHSLIGNWGWSIIALTVLIKLAFFPLSAASYRSMARMRAVSPKMQAIKEQHGDDRQKMSQAMMELYKKEKINPLGGCLPILVQMPVFLSLYWVLLESVEMRQAPWLGWITDLSVKDPFFILPIVMGGTMLIQQMLNPTPPDPMQAKVMKLMPIIFTFFFLWFPAGLVLYWVVNNCLSIAQQWYITRKIEAAAKTA</sequence>
<comment type="function">
    <text evidence="1">Required for the insertion and/or proper folding and/or complex formation of integral membrane proteins into the membrane. Involved in integration of membrane proteins that insert both dependently and independently of the Sec translocase complex, as well as at least some lipoproteins. Aids folding of multispanning membrane proteins.</text>
</comment>
<comment type="subunit">
    <text evidence="1">Interacts with the Sec translocase complex via SecD. Specifically interacts with transmembrane segments of nascent integral membrane proteins during membrane integration.</text>
</comment>
<comment type="subcellular location">
    <subcellularLocation>
        <location evidence="1">Cell inner membrane</location>
        <topology evidence="1">Multi-pass membrane protein</topology>
    </subcellularLocation>
</comment>
<comment type="similarity">
    <text evidence="1">Belongs to the OXA1/ALB3/YidC family. Type 1 subfamily.</text>
</comment>
<evidence type="ECO:0000255" key="1">
    <source>
        <dbReference type="HAMAP-Rule" id="MF_01810"/>
    </source>
</evidence>
<evidence type="ECO:0000256" key="2">
    <source>
        <dbReference type="SAM" id="MobiDB-lite"/>
    </source>
</evidence>
<proteinExistence type="inferred from homology"/>